<gene>
    <name type="primary">ZNF548</name>
</gene>
<protein>
    <recommendedName>
        <fullName>Zinc finger protein 548</fullName>
    </recommendedName>
</protein>
<comment type="function">
    <text>May be involved in transcriptional regulation.</text>
</comment>
<comment type="subcellular location">
    <subcellularLocation>
        <location evidence="6">Nucleus</location>
    </subcellularLocation>
</comment>
<comment type="alternative products">
    <event type="alternative splicing"/>
    <isoform>
        <id>Q8NEK5-1</id>
        <name>1</name>
        <sequence type="displayed"/>
    </isoform>
    <isoform>
        <id>Q8NEK5-2</id>
        <name>2</name>
        <sequence type="described" ref="VSP_019453"/>
    </isoform>
</comment>
<comment type="similarity">
    <text evidence="6">Belongs to the krueppel C2H2-type zinc-finger protein family.</text>
</comment>
<dbReference type="EMBL" id="AC003002">
    <property type="status" value="NOT_ANNOTATED_CDS"/>
    <property type="molecule type" value="Genomic_DNA"/>
</dbReference>
<dbReference type="EMBL" id="BC030788">
    <property type="protein sequence ID" value="AAH30788.1"/>
    <property type="molecule type" value="mRNA"/>
</dbReference>
<dbReference type="EMBL" id="AK057494">
    <property type="protein sequence ID" value="BAB71509.1"/>
    <property type="molecule type" value="mRNA"/>
</dbReference>
<dbReference type="CCDS" id="CCDS46209.1">
    <molecule id="Q8NEK5-1"/>
</dbReference>
<dbReference type="CCDS" id="CCDS54324.1">
    <molecule id="Q8NEK5-2"/>
</dbReference>
<dbReference type="RefSeq" id="NP_001166244.1">
    <molecule id="Q8NEK5-2"/>
    <property type="nucleotide sequence ID" value="NM_001172773.2"/>
</dbReference>
<dbReference type="RefSeq" id="NP_690873.2">
    <molecule id="Q8NEK5-1"/>
    <property type="nucleotide sequence ID" value="NM_152909.4"/>
</dbReference>
<dbReference type="SMR" id="Q8NEK5"/>
<dbReference type="BioGRID" id="127076">
    <property type="interactions" value="6"/>
</dbReference>
<dbReference type="FunCoup" id="Q8NEK5">
    <property type="interactions" value="8"/>
</dbReference>
<dbReference type="IntAct" id="Q8NEK5">
    <property type="interactions" value="3"/>
</dbReference>
<dbReference type="STRING" id="9606.ENSP00000337555"/>
<dbReference type="GlyGen" id="Q8NEK5">
    <property type="glycosylation" value="1 site, 1 O-linked glycan (1 site)"/>
</dbReference>
<dbReference type="iPTMnet" id="Q8NEK5"/>
<dbReference type="PhosphoSitePlus" id="Q8NEK5"/>
<dbReference type="BioMuta" id="ZNF548"/>
<dbReference type="DMDM" id="296453046"/>
<dbReference type="jPOST" id="Q8NEK5"/>
<dbReference type="MassIVE" id="Q8NEK5"/>
<dbReference type="PaxDb" id="9606-ENSP00000337555"/>
<dbReference type="PeptideAtlas" id="Q8NEK5"/>
<dbReference type="ProteomicsDB" id="73171">
    <molecule id="Q8NEK5-1"/>
</dbReference>
<dbReference type="ProteomicsDB" id="73172">
    <molecule id="Q8NEK5-2"/>
</dbReference>
<dbReference type="Antibodypedia" id="33250">
    <property type="antibodies" value="51 antibodies from 15 providers"/>
</dbReference>
<dbReference type="DNASU" id="147694"/>
<dbReference type="Ensembl" id="ENST00000336128.12">
    <molecule id="Q8NEK5-2"/>
    <property type="protein sequence ID" value="ENSP00000337555.6"/>
    <property type="gene ID" value="ENSG00000188785.13"/>
</dbReference>
<dbReference type="Ensembl" id="ENST00000366197.10">
    <molecule id="Q8NEK5-1"/>
    <property type="protein sequence ID" value="ENSP00000379482.3"/>
    <property type="gene ID" value="ENSG00000188785.13"/>
</dbReference>
<dbReference type="GeneID" id="147694"/>
<dbReference type="KEGG" id="hsa:147694"/>
<dbReference type="MANE-Select" id="ENST00000336128.12">
    <molecule id="Q8NEK5-2"/>
    <property type="protein sequence ID" value="ENSP00000337555.6"/>
    <property type="RefSeq nucleotide sequence ID" value="NM_001172773.2"/>
    <property type="RefSeq protein sequence ID" value="NP_001166244.1"/>
</dbReference>
<dbReference type="UCSC" id="uc002qom.4">
    <molecule id="Q8NEK5-1"/>
    <property type="organism name" value="human"/>
</dbReference>
<dbReference type="AGR" id="HGNC:26561"/>
<dbReference type="CTD" id="147694"/>
<dbReference type="DisGeNET" id="147694"/>
<dbReference type="GeneCards" id="ZNF548"/>
<dbReference type="HGNC" id="HGNC:26561">
    <property type="gene designation" value="ZNF548"/>
</dbReference>
<dbReference type="HPA" id="ENSG00000188785">
    <property type="expression patterns" value="Low tissue specificity"/>
</dbReference>
<dbReference type="neXtProt" id="NX_Q8NEK5"/>
<dbReference type="OpenTargets" id="ENSG00000188785"/>
<dbReference type="PharmGKB" id="PA134889718"/>
<dbReference type="VEuPathDB" id="HostDB:ENSG00000188785"/>
<dbReference type="eggNOG" id="KOG1721">
    <property type="taxonomic scope" value="Eukaryota"/>
</dbReference>
<dbReference type="GeneTree" id="ENSGT00940000163177"/>
<dbReference type="HOGENOM" id="CLU_002678_44_5_1"/>
<dbReference type="InParanoid" id="Q8NEK5"/>
<dbReference type="OMA" id="NANFVKH"/>
<dbReference type="OrthoDB" id="427030at2759"/>
<dbReference type="PAN-GO" id="Q8NEK5">
    <property type="GO annotations" value="4 GO annotations based on evolutionary models"/>
</dbReference>
<dbReference type="PhylomeDB" id="Q8NEK5"/>
<dbReference type="TreeFam" id="TF339848"/>
<dbReference type="PathwayCommons" id="Q8NEK5"/>
<dbReference type="Reactome" id="R-HSA-212436">
    <property type="pathway name" value="Generic Transcription Pathway"/>
</dbReference>
<dbReference type="SignaLink" id="Q8NEK5"/>
<dbReference type="BioGRID-ORCS" id="147694">
    <property type="hits" value="7 hits in 1181 CRISPR screens"/>
</dbReference>
<dbReference type="ChiTaRS" id="ZNF548">
    <property type="organism name" value="human"/>
</dbReference>
<dbReference type="GenomeRNAi" id="147694"/>
<dbReference type="Pharos" id="Q8NEK5">
    <property type="development level" value="Tdark"/>
</dbReference>
<dbReference type="PRO" id="PR:Q8NEK5"/>
<dbReference type="Proteomes" id="UP000005640">
    <property type="component" value="Chromosome 19"/>
</dbReference>
<dbReference type="RNAct" id="Q8NEK5">
    <property type="molecule type" value="protein"/>
</dbReference>
<dbReference type="Bgee" id="ENSG00000188785">
    <property type="expression patterns" value="Expressed in gingival epithelium and 186 other cell types or tissues"/>
</dbReference>
<dbReference type="ExpressionAtlas" id="Q8NEK5">
    <property type="expression patterns" value="baseline and differential"/>
</dbReference>
<dbReference type="GO" id="GO:0005634">
    <property type="term" value="C:nucleus"/>
    <property type="evidence" value="ECO:0000318"/>
    <property type="project" value="GO_Central"/>
</dbReference>
<dbReference type="GO" id="GO:0000981">
    <property type="term" value="F:DNA-binding transcription factor activity, RNA polymerase II-specific"/>
    <property type="evidence" value="ECO:0000318"/>
    <property type="project" value="GO_Central"/>
</dbReference>
<dbReference type="GO" id="GO:0000978">
    <property type="term" value="F:RNA polymerase II cis-regulatory region sequence-specific DNA binding"/>
    <property type="evidence" value="ECO:0000318"/>
    <property type="project" value="GO_Central"/>
</dbReference>
<dbReference type="GO" id="GO:0008270">
    <property type="term" value="F:zinc ion binding"/>
    <property type="evidence" value="ECO:0007669"/>
    <property type="project" value="UniProtKB-KW"/>
</dbReference>
<dbReference type="GO" id="GO:0006357">
    <property type="term" value="P:regulation of transcription by RNA polymerase II"/>
    <property type="evidence" value="ECO:0000318"/>
    <property type="project" value="GO_Central"/>
</dbReference>
<dbReference type="CDD" id="cd07765">
    <property type="entry name" value="KRAB_A-box"/>
    <property type="match status" value="1"/>
</dbReference>
<dbReference type="FunFam" id="3.30.160.60:FF:000144">
    <property type="entry name" value="zinc finger protein 181 isoform X1"/>
    <property type="match status" value="2"/>
</dbReference>
<dbReference type="FunFam" id="3.30.160.60:FF:000127">
    <property type="entry name" value="Zinc finger protein 354C"/>
    <property type="match status" value="4"/>
</dbReference>
<dbReference type="FunFam" id="3.30.160.60:FF:002004">
    <property type="entry name" value="Zinc finger protein 473"/>
    <property type="match status" value="1"/>
</dbReference>
<dbReference type="FunFam" id="3.30.160.60:FF:000098">
    <property type="entry name" value="Zinc finger protein 614"/>
    <property type="match status" value="3"/>
</dbReference>
<dbReference type="FunFam" id="3.30.160.60:FF:003143">
    <property type="entry name" value="ZNF749 isoform 1"/>
    <property type="match status" value="1"/>
</dbReference>
<dbReference type="Gene3D" id="6.10.140.140">
    <property type="match status" value="1"/>
</dbReference>
<dbReference type="Gene3D" id="3.30.160.60">
    <property type="entry name" value="Classic Zinc Finger"/>
    <property type="match status" value="11"/>
</dbReference>
<dbReference type="InterPro" id="IPR001909">
    <property type="entry name" value="KRAB"/>
</dbReference>
<dbReference type="InterPro" id="IPR036051">
    <property type="entry name" value="KRAB_dom_sf"/>
</dbReference>
<dbReference type="InterPro" id="IPR050527">
    <property type="entry name" value="Snail/Krueppel_Znf"/>
</dbReference>
<dbReference type="InterPro" id="IPR036236">
    <property type="entry name" value="Znf_C2H2_sf"/>
</dbReference>
<dbReference type="InterPro" id="IPR013087">
    <property type="entry name" value="Znf_C2H2_type"/>
</dbReference>
<dbReference type="PANTHER" id="PTHR24388">
    <property type="entry name" value="ZINC FINGER PROTEIN"/>
    <property type="match status" value="1"/>
</dbReference>
<dbReference type="PANTHER" id="PTHR24388:SF51">
    <property type="entry name" value="ZINC FINGER PROTEIN 281-RELATED"/>
    <property type="match status" value="1"/>
</dbReference>
<dbReference type="Pfam" id="PF01352">
    <property type="entry name" value="KRAB"/>
    <property type="match status" value="1"/>
</dbReference>
<dbReference type="Pfam" id="PF00096">
    <property type="entry name" value="zf-C2H2"/>
    <property type="match status" value="11"/>
</dbReference>
<dbReference type="SMART" id="SM00349">
    <property type="entry name" value="KRAB"/>
    <property type="match status" value="1"/>
</dbReference>
<dbReference type="SMART" id="SM00355">
    <property type="entry name" value="ZnF_C2H2"/>
    <property type="match status" value="11"/>
</dbReference>
<dbReference type="SUPFAM" id="SSF57667">
    <property type="entry name" value="beta-beta-alpha zinc fingers"/>
    <property type="match status" value="6"/>
</dbReference>
<dbReference type="SUPFAM" id="SSF109640">
    <property type="entry name" value="KRAB domain (Kruppel-associated box)"/>
    <property type="match status" value="1"/>
</dbReference>
<dbReference type="PROSITE" id="PS50805">
    <property type="entry name" value="KRAB"/>
    <property type="match status" value="1"/>
</dbReference>
<dbReference type="PROSITE" id="PS00028">
    <property type="entry name" value="ZINC_FINGER_C2H2_1"/>
    <property type="match status" value="11"/>
</dbReference>
<dbReference type="PROSITE" id="PS50157">
    <property type="entry name" value="ZINC_FINGER_C2H2_2"/>
    <property type="match status" value="11"/>
</dbReference>
<sequence>MNLTEGRVVFEDVAIYFSQEEWGHLDEAQRLLYRDVMLENLALLSSLGSWHGAEDEEAPSQQGFSVGVSEVTASKPCLSSQKVHPSETCGPPLKDILCLVEHNGIHPEQHIYICEAELFQHPKQQIGENLSRGDDWIPSFGKNHRVHMAEEIFTCMEGWKDLPATSCLLQHQGPQSEWKPYRDTEDREAFQTGQNDYKCSECGKTFTCSYSFVEHQKIHTGERSYECNKCGKFFKYSANFMKHQTVHTSERTYECRECGKSFMYNYRLMRHKRVHTGERPYECNTCGKFFRYSSTFVRHQRVHTGERPYECRECGKFFMDSSTLIKHQRVHTGERPYKCNDCGKFFRYISTLIRHQRIHTGERPYECSVCGELFRYNSSLVKHWRNHTGERPYKCSECGKSFRYHCRLIRHQRVHTGERPYECSECGKFFRYNSNLIKHWRNHTGERPYECRECGKAFSHKHILVEHQKIHSGERPYECSECQKAFIRKSHLVHHQKIHSEERLVCSMNVGNSLAKTPTSLNIRDFTMEKVYH</sequence>
<proteinExistence type="evidence at protein level"/>
<name>ZN548_HUMAN</name>
<accession>Q8NEK5</accession>
<accession>Q96M05</accession>
<evidence type="ECO:0000255" key="1">
    <source>
        <dbReference type="PROSITE-ProRule" id="PRU00042"/>
    </source>
</evidence>
<evidence type="ECO:0000255" key="2">
    <source>
        <dbReference type="PROSITE-ProRule" id="PRU00119"/>
    </source>
</evidence>
<evidence type="ECO:0000269" key="3">
    <source>
    </source>
</evidence>
<evidence type="ECO:0000269" key="4">
    <source>
    </source>
</evidence>
<evidence type="ECO:0000303" key="5">
    <source>
    </source>
</evidence>
<evidence type="ECO:0000305" key="6"/>
<evidence type="ECO:0007744" key="7">
    <source>
    </source>
</evidence>
<organism>
    <name type="scientific">Homo sapiens</name>
    <name type="common">Human</name>
    <dbReference type="NCBI Taxonomy" id="9606"/>
    <lineage>
        <taxon>Eukaryota</taxon>
        <taxon>Metazoa</taxon>
        <taxon>Chordata</taxon>
        <taxon>Craniata</taxon>
        <taxon>Vertebrata</taxon>
        <taxon>Euteleostomi</taxon>
        <taxon>Mammalia</taxon>
        <taxon>Eutheria</taxon>
        <taxon>Euarchontoglires</taxon>
        <taxon>Primates</taxon>
        <taxon>Haplorrhini</taxon>
        <taxon>Catarrhini</taxon>
        <taxon>Hominidae</taxon>
        <taxon>Homo</taxon>
    </lineage>
</organism>
<keyword id="KW-0025">Alternative splicing</keyword>
<keyword id="KW-0238">DNA-binding</keyword>
<keyword id="KW-1017">Isopeptide bond</keyword>
<keyword id="KW-0479">Metal-binding</keyword>
<keyword id="KW-0539">Nucleus</keyword>
<keyword id="KW-1267">Proteomics identification</keyword>
<keyword id="KW-1185">Reference proteome</keyword>
<keyword id="KW-0677">Repeat</keyword>
<keyword id="KW-0804">Transcription</keyword>
<keyword id="KW-0805">Transcription regulation</keyword>
<keyword id="KW-0832">Ubl conjugation</keyword>
<keyword id="KW-0862">Zinc</keyword>
<keyword id="KW-0863">Zinc-finger</keyword>
<reference key="1">
    <citation type="journal article" date="2004" name="Nature">
        <title>The DNA sequence and biology of human chromosome 19.</title>
        <authorList>
            <person name="Grimwood J."/>
            <person name="Gordon L.A."/>
            <person name="Olsen A.S."/>
            <person name="Terry A."/>
            <person name="Schmutz J."/>
            <person name="Lamerdin J.E."/>
            <person name="Hellsten U."/>
            <person name="Goodstein D."/>
            <person name="Couronne O."/>
            <person name="Tran-Gyamfi M."/>
            <person name="Aerts A."/>
            <person name="Altherr M."/>
            <person name="Ashworth L."/>
            <person name="Bajorek E."/>
            <person name="Black S."/>
            <person name="Branscomb E."/>
            <person name="Caenepeel S."/>
            <person name="Carrano A.V."/>
            <person name="Caoile C."/>
            <person name="Chan Y.M."/>
            <person name="Christensen M."/>
            <person name="Cleland C.A."/>
            <person name="Copeland A."/>
            <person name="Dalin E."/>
            <person name="Dehal P."/>
            <person name="Denys M."/>
            <person name="Detter J.C."/>
            <person name="Escobar J."/>
            <person name="Flowers D."/>
            <person name="Fotopulos D."/>
            <person name="Garcia C."/>
            <person name="Georgescu A.M."/>
            <person name="Glavina T."/>
            <person name="Gomez M."/>
            <person name="Gonzales E."/>
            <person name="Groza M."/>
            <person name="Hammon N."/>
            <person name="Hawkins T."/>
            <person name="Haydu L."/>
            <person name="Ho I."/>
            <person name="Huang W."/>
            <person name="Israni S."/>
            <person name="Jett J."/>
            <person name="Kadner K."/>
            <person name="Kimball H."/>
            <person name="Kobayashi A."/>
            <person name="Larionov V."/>
            <person name="Leem S.-H."/>
            <person name="Lopez F."/>
            <person name="Lou Y."/>
            <person name="Lowry S."/>
            <person name="Malfatti S."/>
            <person name="Martinez D."/>
            <person name="McCready P.M."/>
            <person name="Medina C."/>
            <person name="Morgan J."/>
            <person name="Nelson K."/>
            <person name="Nolan M."/>
            <person name="Ovcharenko I."/>
            <person name="Pitluck S."/>
            <person name="Pollard M."/>
            <person name="Popkie A.P."/>
            <person name="Predki P."/>
            <person name="Quan G."/>
            <person name="Ramirez L."/>
            <person name="Rash S."/>
            <person name="Retterer J."/>
            <person name="Rodriguez A."/>
            <person name="Rogers S."/>
            <person name="Salamov A."/>
            <person name="Salazar A."/>
            <person name="She X."/>
            <person name="Smith D."/>
            <person name="Slezak T."/>
            <person name="Solovyev V."/>
            <person name="Thayer N."/>
            <person name="Tice H."/>
            <person name="Tsai M."/>
            <person name="Ustaszewska A."/>
            <person name="Vo N."/>
            <person name="Wagner M."/>
            <person name="Wheeler J."/>
            <person name="Wu K."/>
            <person name="Xie G."/>
            <person name="Yang J."/>
            <person name="Dubchak I."/>
            <person name="Furey T.S."/>
            <person name="DeJong P."/>
            <person name="Dickson M."/>
            <person name="Gordon D."/>
            <person name="Eichler E.E."/>
            <person name="Pennacchio L.A."/>
            <person name="Richardson P."/>
            <person name="Stubbs L."/>
            <person name="Rokhsar D.S."/>
            <person name="Myers R.M."/>
            <person name="Rubin E.M."/>
            <person name="Lucas S.M."/>
        </authorList>
    </citation>
    <scope>NUCLEOTIDE SEQUENCE [LARGE SCALE GENOMIC DNA]</scope>
</reference>
<reference key="2">
    <citation type="journal article" date="2004" name="Genome Res.">
        <title>The status, quality, and expansion of the NIH full-length cDNA project: the Mammalian Gene Collection (MGC).</title>
        <authorList>
            <consortium name="The MGC Project Team"/>
        </authorList>
    </citation>
    <scope>NUCLEOTIDE SEQUENCE [LARGE SCALE MRNA] (ISOFORM 1)</scope>
    <scope>VARIANTS SER-58 AND THR-73</scope>
    <source>
        <tissue>Testis</tissue>
    </source>
</reference>
<reference key="3">
    <citation type="journal article" date="2004" name="Nat. Genet.">
        <title>Complete sequencing and characterization of 21,243 full-length human cDNAs.</title>
        <authorList>
            <person name="Ota T."/>
            <person name="Suzuki Y."/>
            <person name="Nishikawa T."/>
            <person name="Otsuki T."/>
            <person name="Sugiyama T."/>
            <person name="Irie R."/>
            <person name="Wakamatsu A."/>
            <person name="Hayashi K."/>
            <person name="Sato H."/>
            <person name="Nagai K."/>
            <person name="Kimura K."/>
            <person name="Makita H."/>
            <person name="Sekine M."/>
            <person name="Obayashi M."/>
            <person name="Nishi T."/>
            <person name="Shibahara T."/>
            <person name="Tanaka T."/>
            <person name="Ishii S."/>
            <person name="Yamamoto J."/>
            <person name="Saito K."/>
            <person name="Kawai Y."/>
            <person name="Isono Y."/>
            <person name="Nakamura Y."/>
            <person name="Nagahari K."/>
            <person name="Murakami K."/>
            <person name="Yasuda T."/>
            <person name="Iwayanagi T."/>
            <person name="Wagatsuma M."/>
            <person name="Shiratori A."/>
            <person name="Sudo H."/>
            <person name="Hosoiri T."/>
            <person name="Kaku Y."/>
            <person name="Kodaira H."/>
            <person name="Kondo H."/>
            <person name="Sugawara M."/>
            <person name="Takahashi M."/>
            <person name="Kanda K."/>
            <person name="Yokoi T."/>
            <person name="Furuya T."/>
            <person name="Kikkawa E."/>
            <person name="Omura Y."/>
            <person name="Abe K."/>
            <person name="Kamihara K."/>
            <person name="Katsuta N."/>
            <person name="Sato K."/>
            <person name="Tanikawa M."/>
            <person name="Yamazaki M."/>
            <person name="Ninomiya K."/>
            <person name="Ishibashi T."/>
            <person name="Yamashita H."/>
            <person name="Murakawa K."/>
            <person name="Fujimori K."/>
            <person name="Tanai H."/>
            <person name="Kimata M."/>
            <person name="Watanabe M."/>
            <person name="Hiraoka S."/>
            <person name="Chiba Y."/>
            <person name="Ishida S."/>
            <person name="Ono Y."/>
            <person name="Takiguchi S."/>
            <person name="Watanabe S."/>
            <person name="Yosida M."/>
            <person name="Hotuta T."/>
            <person name="Kusano J."/>
            <person name="Kanehori K."/>
            <person name="Takahashi-Fujii A."/>
            <person name="Hara H."/>
            <person name="Tanase T.-O."/>
            <person name="Nomura Y."/>
            <person name="Togiya S."/>
            <person name="Komai F."/>
            <person name="Hara R."/>
            <person name="Takeuchi K."/>
            <person name="Arita M."/>
            <person name="Imose N."/>
            <person name="Musashino K."/>
            <person name="Yuuki H."/>
            <person name="Oshima A."/>
            <person name="Sasaki N."/>
            <person name="Aotsuka S."/>
            <person name="Yoshikawa Y."/>
            <person name="Matsunawa H."/>
            <person name="Ichihara T."/>
            <person name="Shiohata N."/>
            <person name="Sano S."/>
            <person name="Moriya S."/>
            <person name="Momiyama H."/>
            <person name="Satoh N."/>
            <person name="Takami S."/>
            <person name="Terashima Y."/>
            <person name="Suzuki O."/>
            <person name="Nakagawa S."/>
            <person name="Senoh A."/>
            <person name="Mizoguchi H."/>
            <person name="Goto Y."/>
            <person name="Shimizu F."/>
            <person name="Wakebe H."/>
            <person name="Hishigaki H."/>
            <person name="Watanabe T."/>
            <person name="Sugiyama A."/>
            <person name="Takemoto M."/>
            <person name="Kawakami B."/>
            <person name="Yamazaki M."/>
            <person name="Watanabe K."/>
            <person name="Kumagai A."/>
            <person name="Itakura S."/>
            <person name="Fukuzumi Y."/>
            <person name="Fujimori Y."/>
            <person name="Komiyama M."/>
            <person name="Tashiro H."/>
            <person name="Tanigami A."/>
            <person name="Fujiwara T."/>
            <person name="Ono T."/>
            <person name="Yamada K."/>
            <person name="Fujii Y."/>
            <person name="Ozaki K."/>
            <person name="Hirao M."/>
            <person name="Ohmori Y."/>
            <person name="Kawabata A."/>
            <person name="Hikiji T."/>
            <person name="Kobatake N."/>
            <person name="Inagaki H."/>
            <person name="Ikema Y."/>
            <person name="Okamoto S."/>
            <person name="Okitani R."/>
            <person name="Kawakami T."/>
            <person name="Noguchi S."/>
            <person name="Itoh T."/>
            <person name="Shigeta K."/>
            <person name="Senba T."/>
            <person name="Matsumura K."/>
            <person name="Nakajima Y."/>
            <person name="Mizuno T."/>
            <person name="Morinaga M."/>
            <person name="Sasaki M."/>
            <person name="Togashi T."/>
            <person name="Oyama M."/>
            <person name="Hata H."/>
            <person name="Watanabe M."/>
            <person name="Komatsu T."/>
            <person name="Mizushima-Sugano J."/>
            <person name="Satoh T."/>
            <person name="Shirai Y."/>
            <person name="Takahashi Y."/>
            <person name="Nakagawa K."/>
            <person name="Okumura K."/>
            <person name="Nagase T."/>
            <person name="Nomura N."/>
            <person name="Kikuchi H."/>
            <person name="Masuho Y."/>
            <person name="Yamashita R."/>
            <person name="Nakai K."/>
            <person name="Yada T."/>
            <person name="Nakamura Y."/>
            <person name="Ohara O."/>
            <person name="Isogai T."/>
            <person name="Sugano S."/>
        </authorList>
    </citation>
    <scope>NUCLEOTIDE SEQUENCE [LARGE SCALE MRNA] OF 1-528 (ISOFORM 2)</scope>
    <scope>VARIANT THR-73</scope>
    <source>
        <tissue>Testis</tissue>
    </source>
</reference>
<reference key="4">
    <citation type="journal article" date="2017" name="Nat. Struct. Mol. Biol.">
        <title>Site-specific mapping of the human SUMO proteome reveals co-modification with phosphorylation.</title>
        <authorList>
            <person name="Hendriks I.A."/>
            <person name="Lyon D."/>
            <person name="Young C."/>
            <person name="Jensen L.J."/>
            <person name="Vertegaal A.C."/>
            <person name="Nielsen M.L."/>
        </authorList>
    </citation>
    <scope>SUMOYLATION [LARGE SCALE ANALYSIS] AT LYS-516</scope>
    <scope>IDENTIFICATION BY MASS SPECTROMETRY [LARGE SCALE ANALYSIS]</scope>
</reference>
<feature type="chain" id="PRO_0000242160" description="Zinc finger protein 548">
    <location>
        <begin position="1"/>
        <end position="533"/>
    </location>
</feature>
<feature type="domain" description="KRAB" evidence="2">
    <location>
        <begin position="8"/>
        <end position="79"/>
    </location>
</feature>
<feature type="zinc finger region" description="C2H2-type 1" evidence="1">
    <location>
        <begin position="197"/>
        <end position="219"/>
    </location>
</feature>
<feature type="zinc finger region" description="C2H2-type 2" evidence="1">
    <location>
        <begin position="225"/>
        <end position="247"/>
    </location>
</feature>
<feature type="zinc finger region" description="C2H2-type 3" evidence="1">
    <location>
        <begin position="253"/>
        <end position="275"/>
    </location>
</feature>
<feature type="zinc finger region" description="C2H2-type 4" evidence="1">
    <location>
        <begin position="281"/>
        <end position="303"/>
    </location>
</feature>
<feature type="zinc finger region" description="C2H2-type 5" evidence="1">
    <location>
        <begin position="309"/>
        <end position="331"/>
    </location>
</feature>
<feature type="zinc finger region" description="C2H2-type 6" evidence="1">
    <location>
        <begin position="337"/>
        <end position="359"/>
    </location>
</feature>
<feature type="zinc finger region" description="C2H2-type 7" evidence="1">
    <location>
        <begin position="365"/>
        <end position="387"/>
    </location>
</feature>
<feature type="zinc finger region" description="C2H2-type 8" evidence="1">
    <location>
        <begin position="393"/>
        <end position="415"/>
    </location>
</feature>
<feature type="zinc finger region" description="C2H2-type 9" evidence="1">
    <location>
        <begin position="421"/>
        <end position="443"/>
    </location>
</feature>
<feature type="zinc finger region" description="C2H2-type 10" evidence="1">
    <location>
        <begin position="449"/>
        <end position="471"/>
    </location>
</feature>
<feature type="zinc finger region" description="C2H2-type 11" evidence="1">
    <location>
        <begin position="477"/>
        <end position="499"/>
    </location>
</feature>
<feature type="cross-link" description="Glycyl lysine isopeptide (Lys-Gly) (interchain with G-Cter in SUMO2)" evidence="7">
    <location>
        <position position="516"/>
    </location>
</feature>
<feature type="splice variant" id="VSP_019453" description="In isoform 2." evidence="5">
    <original>G</original>
    <variation>GPLAMAEMDPTQG</variation>
    <location>
        <position position="6"/>
    </location>
</feature>
<feature type="sequence variant" id="VAR_026845" description="In dbSNP:rs17856896." evidence="4">
    <original>A</original>
    <variation>S</variation>
    <location>
        <position position="58"/>
    </location>
</feature>
<feature type="sequence variant" id="VAR_026846" description="In dbSNP:rs4801478." evidence="3 4">
    <original>A</original>
    <variation>T</variation>
    <location>
        <position position="73"/>
    </location>
</feature>
<feature type="sequence conflict" description="In Ref. 3; BAB71509." evidence="6" ref="3">
    <original>N</original>
    <variation>S</variation>
    <location>
        <position position="377"/>
    </location>
</feature>